<feature type="chain" id="PRO_0000446451" description="Pathogenesis-related 5 protein Cup a 3">
    <location>
        <begin position="1" status="less than"/>
        <end position="199"/>
    </location>
</feature>
<feature type="disulfide bond" evidence="1 2">
    <location>
        <begin position="9"/>
        <end position="198"/>
    </location>
</feature>
<feature type="disulfide bond" evidence="1 2">
    <location>
        <begin position="50"/>
        <end position="60"/>
    </location>
</feature>
<feature type="disulfide bond" evidence="1 2">
    <location>
        <begin position="65"/>
        <end position="71"/>
    </location>
</feature>
<feature type="disulfide bond" evidence="1 2">
    <location>
        <begin position="113"/>
        <end position="187"/>
    </location>
</feature>
<feature type="disulfide bond" evidence="1 2">
    <location>
        <begin position="118"/>
        <end position="171"/>
    </location>
</feature>
<feature type="disulfide bond" evidence="1 2">
    <location>
        <begin position="126"/>
        <end position="136"/>
    </location>
</feature>
<feature type="disulfide bond" evidence="1 2">
    <location>
        <begin position="140"/>
        <end position="149"/>
    </location>
</feature>
<feature type="disulfide bond" evidence="1 2">
    <location>
        <begin position="150"/>
        <end position="158"/>
    </location>
</feature>
<feature type="non-terminal residue" evidence="8">
    <location>
        <position position="1"/>
    </location>
</feature>
<comment type="subcellular location">
    <subcellularLocation>
        <location evidence="3 4">Secreted</location>
    </subcellularLocation>
    <subcellularLocation>
        <location evidence="4">Secreted</location>
        <location evidence="4">Extracellular space</location>
        <location evidence="4">Extracellular matrix</location>
        <location evidence="4">Pollen coat</location>
    </subcellularLocation>
    <subcellularLocation>
        <location evidence="4">Cytoplasm</location>
    </subcellularLocation>
    <subcellularLocation>
        <location evidence="4">Nucleus</location>
    </subcellularLocation>
    <subcellularLocation>
        <location evidence="4">Mitochondrion</location>
    </subcellularLocation>
    <subcellularLocation>
        <location evidence="4">Endoplasmic reticulum</location>
    </subcellularLocation>
    <subcellularLocation>
        <location evidence="4">Golgi apparatus</location>
        <location evidence="4">Golgi stack</location>
    </subcellularLocation>
    <subcellularLocation>
        <location evidence="4">Vesicle</location>
    </subcellularLocation>
    <subcellularLocation>
        <location evidence="4">Vacuole</location>
    </subcellularLocation>
    <text evidence="4">Localizes in orbicules, walls, nucleus and to condensed dormant structures in the cytoplasm of the mature nonhydrated pollen grains. Upon germination, localizes in mitochondria, nucleus, endoplasmic reticulum, Golgi cisterns and vesicles, vacuoles, lipid inclusions and the intine wall.</text>
</comment>
<comment type="tissue specificity">
    <text evidence="3 4">Expressed in pollen.</text>
</comment>
<comment type="developmental stage">
    <text evidence="4">Expressed during dehydration, dormancy, air dispersion, hydrated preactivated and germination stages. In hydrated pollen grains, expressed in discarded exine, the exudates, and the orbicules. Expressed in developing lamellate structures of the microspore cell cytoplasm.</text>
</comment>
<comment type="induction">
    <text evidence="3 4">By air pollution.</text>
</comment>
<comment type="allergen">
    <text evidence="3">Causes an allergic reaction in human. Binds to IgE in 63% of 104 patients allergic to cypress pollen.</text>
</comment>
<comment type="similarity">
    <text evidence="2 7">Belongs to the thaumatin family.</text>
</comment>
<evidence type="ECO:0000255" key="1">
    <source>
        <dbReference type="PIRSR" id="PIRSR002703-1"/>
    </source>
</evidence>
<evidence type="ECO:0000255" key="2">
    <source>
        <dbReference type="PROSITE-ProRule" id="PRU00699"/>
    </source>
</evidence>
<evidence type="ECO:0000269" key="3">
    <source>
    </source>
</evidence>
<evidence type="ECO:0000269" key="4">
    <source>
    </source>
</evidence>
<evidence type="ECO:0000303" key="5">
    <source>
    </source>
</evidence>
<evidence type="ECO:0000303" key="6">
    <source>
    </source>
</evidence>
<evidence type="ECO:0000305" key="7"/>
<evidence type="ECO:0000312" key="8">
    <source>
        <dbReference type="EMBL" id="CAC05258.1"/>
    </source>
</evidence>
<reference evidence="8" key="1">
    <citation type="journal article" date="2004" name="Allergy">
        <title>Cloning and expression of a major allergen from Cupressus arizonica pollen, Cup a 3, a PR-5 protein expressed under polluted environment.</title>
        <authorList>
            <person name="Cortegano I."/>
            <person name="Civantos E."/>
            <person name="Aceituno E."/>
            <person name="del Moral A."/>
            <person name="Lopez E."/>
            <person name="Lombardero M."/>
            <person name="del Pozo V."/>
            <person name="Lahoz C."/>
        </authorList>
    </citation>
    <scope>NUCLEOTIDE SEQUENCE [MRNA]</scope>
    <scope>SUBCELLULAR LOCATION</scope>
    <scope>TISSUE SPECIFICITY</scope>
    <scope>INDUCTION</scope>
    <scope>ALLERGEN</scope>
    <source>
        <tissue evidence="5">Pollen</tissue>
    </source>
</reference>
<reference key="2">
    <citation type="journal article" date="2008" name="Ann. Allergy Asthma Immunol.">
        <title>Effects of air pollution on cup a 3 allergen in Cupressus arizonica pollen grains.</title>
        <authorList>
            <person name="Suarez-Cervera M."/>
            <person name="Castells T."/>
            <person name="Vega-Maray A."/>
            <person name="Civantos E."/>
            <person name="del Pozo V."/>
            <person name="Fernandez-Gonzalez D."/>
            <person name="Moreno-Grau S."/>
            <person name="Moral A."/>
            <person name="Lopez-Iglesias C."/>
            <person name="Lahoz C."/>
            <person name="Seoane-Camba J.A."/>
        </authorList>
    </citation>
    <scope>SUBCELLULAR LOCATION</scope>
    <scope>TISSUE SPECIFICITY</scope>
    <scope>DEVELOPMENTAL STAGE</scope>
    <scope>INDUCTION</scope>
</reference>
<dbReference type="EMBL" id="AJ294411">
    <property type="protein sequence ID" value="CAC05258.1"/>
    <property type="molecule type" value="mRNA"/>
</dbReference>
<dbReference type="SMR" id="Q9FY35"/>
<dbReference type="Allergome" id="898">
    <property type="allergen name" value="Cup a 3"/>
</dbReference>
<dbReference type="GO" id="GO:0005783">
    <property type="term" value="C:endoplasmic reticulum"/>
    <property type="evidence" value="ECO:0000314"/>
    <property type="project" value="UniProtKB"/>
</dbReference>
<dbReference type="GO" id="GO:0043668">
    <property type="term" value="C:exine"/>
    <property type="evidence" value="ECO:0000314"/>
    <property type="project" value="UniProtKB"/>
</dbReference>
<dbReference type="GO" id="GO:0005615">
    <property type="term" value="C:extracellular space"/>
    <property type="evidence" value="ECO:0000314"/>
    <property type="project" value="UniProtKB"/>
</dbReference>
<dbReference type="GO" id="GO:0031985">
    <property type="term" value="C:Golgi cisterna"/>
    <property type="evidence" value="ECO:0000314"/>
    <property type="project" value="UniProtKB"/>
</dbReference>
<dbReference type="GO" id="GO:0005795">
    <property type="term" value="C:Golgi stack"/>
    <property type="evidence" value="ECO:0000314"/>
    <property type="project" value="UniProtKB"/>
</dbReference>
<dbReference type="GO" id="GO:0043678">
    <property type="term" value="C:intine"/>
    <property type="evidence" value="ECO:0000314"/>
    <property type="project" value="UniProtKB"/>
</dbReference>
<dbReference type="GO" id="GO:0005739">
    <property type="term" value="C:mitochondrion"/>
    <property type="evidence" value="ECO:0000314"/>
    <property type="project" value="UniProtKB"/>
</dbReference>
<dbReference type="GO" id="GO:0005634">
    <property type="term" value="C:nucleus"/>
    <property type="evidence" value="ECO:0000314"/>
    <property type="project" value="UniProtKB"/>
</dbReference>
<dbReference type="GO" id="GO:0070505">
    <property type="term" value="C:pollen coat"/>
    <property type="evidence" value="ECO:0000314"/>
    <property type="project" value="UniProtKB"/>
</dbReference>
<dbReference type="GO" id="GO:0070645">
    <property type="term" value="C:Ubisch body"/>
    <property type="evidence" value="ECO:0000314"/>
    <property type="project" value="UniProtKB"/>
</dbReference>
<dbReference type="GO" id="GO:0005773">
    <property type="term" value="C:vacuole"/>
    <property type="evidence" value="ECO:0000314"/>
    <property type="project" value="UniProtKB"/>
</dbReference>
<dbReference type="GO" id="GO:0031982">
    <property type="term" value="C:vesicle"/>
    <property type="evidence" value="ECO:0000314"/>
    <property type="project" value="UniProtKB"/>
</dbReference>
<dbReference type="GO" id="GO:0009846">
    <property type="term" value="P:pollen germination"/>
    <property type="evidence" value="ECO:0000270"/>
    <property type="project" value="UniProtKB"/>
</dbReference>
<dbReference type="GO" id="GO:0009859">
    <property type="term" value="P:pollen hydration"/>
    <property type="evidence" value="ECO:0000314"/>
    <property type="project" value="UniProtKB"/>
</dbReference>
<dbReference type="FunFam" id="2.60.110.10:FF:000003">
    <property type="entry name" value="Thaumatin I"/>
    <property type="match status" value="1"/>
</dbReference>
<dbReference type="Gene3D" id="2.60.110.10">
    <property type="entry name" value="Thaumatin"/>
    <property type="match status" value="1"/>
</dbReference>
<dbReference type="InterPro" id="IPR037176">
    <property type="entry name" value="Osmotin/thaumatin-like_sf"/>
</dbReference>
<dbReference type="InterPro" id="IPR001938">
    <property type="entry name" value="Thaumatin"/>
</dbReference>
<dbReference type="PANTHER" id="PTHR31048">
    <property type="entry name" value="OS03G0233200 PROTEIN"/>
    <property type="match status" value="1"/>
</dbReference>
<dbReference type="Pfam" id="PF00314">
    <property type="entry name" value="Thaumatin"/>
    <property type="match status" value="1"/>
</dbReference>
<dbReference type="PIRSF" id="PIRSF002703">
    <property type="entry name" value="Thaumatin"/>
    <property type="match status" value="1"/>
</dbReference>
<dbReference type="PRINTS" id="PR00347">
    <property type="entry name" value="THAUMATIN"/>
</dbReference>
<dbReference type="SMART" id="SM00205">
    <property type="entry name" value="THN"/>
    <property type="match status" value="1"/>
</dbReference>
<dbReference type="SUPFAM" id="SSF49870">
    <property type="entry name" value="Osmotin, thaumatin-like protein"/>
    <property type="match status" value="1"/>
</dbReference>
<dbReference type="PROSITE" id="PS51367">
    <property type="entry name" value="THAUMATIN_2"/>
    <property type="match status" value="1"/>
</dbReference>
<organism evidence="8">
    <name type="scientific">Hesperocyparis arizonica</name>
    <name type="common">Arizona cypress</name>
    <name type="synonym">Cupressus arizonica</name>
    <dbReference type="NCBI Taxonomy" id="49011"/>
    <lineage>
        <taxon>Eukaryota</taxon>
        <taxon>Viridiplantae</taxon>
        <taxon>Streptophyta</taxon>
        <taxon>Embryophyta</taxon>
        <taxon>Tracheophyta</taxon>
        <taxon>Spermatophyta</taxon>
        <taxon>Pinopsida</taxon>
        <taxon>Pinidae</taxon>
        <taxon>Conifers II</taxon>
        <taxon>Cupressales</taxon>
        <taxon>Cupressaceae</taxon>
        <taxon>Hesperocyparis</taxon>
    </lineage>
</organism>
<keyword id="KW-0020">Allergen</keyword>
<keyword id="KW-0963">Cytoplasm</keyword>
<keyword id="KW-1015">Disulfide bond</keyword>
<keyword id="KW-0256">Endoplasmic reticulum</keyword>
<keyword id="KW-0272">Extracellular matrix</keyword>
<keyword id="KW-0333">Golgi apparatus</keyword>
<keyword id="KW-0496">Mitochondrion</keyword>
<keyword id="KW-0539">Nucleus</keyword>
<keyword id="KW-0964">Secreted</keyword>
<keyword id="KW-0346">Stress response</keyword>
<keyword id="KW-0926">Vacuole</keyword>
<proteinExistence type="evidence at protein level"/>
<sequence length="199" mass="21010">VKFDIKNQCGYTVWAAGLPGGGKEFDQGQTWTVNLAAGTASARFWGRTGCTFDASGKGSCRSGDCGGQLSCTVSGAVPATLAEYTQSDQDYYDVSLVDGFNIPLAINPTNTKCTAPACKADINAVCPSELKVDGGCNSACNVLQTDQYCCRNAYVNNCPATNYSKIFKNQCPQAYSYAKDDTATFACASGTDYSIVFCP</sequence>
<protein>
    <recommendedName>
        <fullName evidence="5">Pathogenesis-related 5 protein Cup a 3</fullName>
        <shortName evidence="5">PR-5 protein Cup a 3</shortName>
    </recommendedName>
    <alternativeName>
        <fullName evidence="5">Pollen protein Cup a 3</fullName>
    </alternativeName>
    <alternativeName>
        <fullName evidence="6">Thaumatin-like protein Cup a 3</fullName>
        <shortName evidence="6">TLP Cup a 3</shortName>
    </alternativeName>
    <allergenName evidence="5 6">Cup a 3</allergenName>
</protein>
<accession>Q9FY35</accession>
<name>PRR3_HESAR</name>